<accession>P47737</accession>
<reference key="1">
    <citation type="journal article" date="1989" name="Mol. Gen. Genet.">
        <title>Nucleotide sequence of the leading region adjacent to the origin of transfer on plasmid F and its conservation among conjugative plasmids.</title>
        <authorList>
            <person name="Loh S."/>
            <person name="Cram D."/>
            <person name="Skurray R.A."/>
        </authorList>
    </citation>
    <scope>NUCLEOTIDE SEQUENCE [GENOMIC DNA]</scope>
</reference>
<reference key="2">
    <citation type="submission" date="2000-04" db="EMBL/GenBank/DDBJ databases">
        <title>Complete nucleotide sequence of the F plasmid: its implications for organization and diversification of plasmid genomes.</title>
        <authorList>
            <person name="Shimizu H."/>
            <person name="Saitoh Y."/>
            <person name="Suda Y."/>
            <person name="Uehara K."/>
            <person name="Sampei G."/>
            <person name="Mizobuchi K."/>
        </authorList>
    </citation>
    <scope>NUCLEOTIDE SEQUENCE [LARGE SCALE GENOMIC DNA]</scope>
    <source>
        <strain>K12 / CR63</strain>
    </source>
</reference>
<reference key="3">
    <citation type="journal article" date="1984" name="EMBO J.">
        <title>The F plasmid origin of transfer: DNA sequence of wild-type and mutant origins and location of origin-specific nicks.</title>
        <authorList>
            <person name="Thompson R."/>
            <person name="Taylor L."/>
            <person name="Kelly K."/>
            <person name="Everett R."/>
            <person name="Willetts N."/>
        </authorList>
    </citation>
    <scope>NUCLEOTIDE SEQUENCE [GENOMIC DNA] OF 1-15</scope>
</reference>
<organism>
    <name type="scientific">Escherichia coli (strain K12)</name>
    <dbReference type="NCBI Taxonomy" id="83333"/>
    <lineage>
        <taxon>Bacteria</taxon>
        <taxon>Pseudomonadati</taxon>
        <taxon>Pseudomonadota</taxon>
        <taxon>Gammaproteobacteria</taxon>
        <taxon>Enterobacterales</taxon>
        <taxon>Enterobacteriaceae</taxon>
        <taxon>Escherichia</taxon>
    </lineage>
</organism>
<sequence length="169" mass="19285">MKKWMLAICLMFINEICHATDCFDLAGRDYKIDPDLLRAISWKESRYRVNAIGINPVTGYGSGLMQVDSQHFNELARYGIKPEHLTTDPCMNIYTGAYYLAIAFKKWGVSWEAVGAYNAGFRKTERQNQRRLAYASDVYRIYTGIKSSKGIRIPATKKSLPEINSVQNN</sequence>
<name>X19F_ECOLI</name>
<gene>
    <name type="primary">yubQ</name>
    <name type="synonym">19</name>
    <name type="synonym">X</name>
    <name type="synonym">ygfA</name>
    <name type="ordered locus">ECOK12F070</name>
</gene>
<keyword id="KW-0614">Plasmid</keyword>
<geneLocation type="plasmid">
    <name>F</name>
</geneLocation>
<feature type="chain" id="PRO_0000068495" description="X polypeptide">
    <location>
        <begin position="1"/>
        <end position="169"/>
    </location>
</feature>
<comment type="similarity">
    <text evidence="1">Belongs to the IagB/IpgF/P19 family.</text>
</comment>
<dbReference type="EMBL" id="X17539">
    <property type="protein sequence ID" value="CAA35576.1"/>
    <property type="molecule type" value="Genomic_DNA"/>
</dbReference>
<dbReference type="EMBL" id="AF106329">
    <property type="protein sequence ID" value="AAA99219.1"/>
    <property type="molecule type" value="Genomic_DNA"/>
</dbReference>
<dbReference type="EMBL" id="AP001918">
    <property type="protein sequence ID" value="BAA97940.1"/>
    <property type="molecule type" value="Genomic_DNA"/>
</dbReference>
<dbReference type="EMBL" id="X00545">
    <property type="protein sequence ID" value="CAA25215.1"/>
    <property type="molecule type" value="Genomic_DNA"/>
</dbReference>
<dbReference type="PIR" id="S07015">
    <property type="entry name" value="S07015"/>
</dbReference>
<dbReference type="RefSeq" id="NP_061449.1">
    <property type="nucleotide sequence ID" value="NC_002483.1"/>
</dbReference>
<dbReference type="RefSeq" id="YP_001294732.1">
    <property type="nucleotide sequence ID" value="NC_009602.1"/>
</dbReference>
<dbReference type="SMR" id="P47737"/>
<dbReference type="PhylomeDB" id="P47737"/>
<dbReference type="PRO" id="PR:P47737"/>
<dbReference type="CDD" id="cd13400">
    <property type="entry name" value="LT_IagB-like"/>
    <property type="match status" value="1"/>
</dbReference>
<dbReference type="Gene3D" id="1.10.530.10">
    <property type="match status" value="1"/>
</dbReference>
<dbReference type="InterPro" id="IPR023346">
    <property type="entry name" value="Lysozyme-like_dom_sf"/>
</dbReference>
<dbReference type="InterPro" id="IPR008258">
    <property type="entry name" value="Transglycosylase_SLT_dom_1"/>
</dbReference>
<dbReference type="Pfam" id="PF01464">
    <property type="entry name" value="SLT"/>
    <property type="match status" value="1"/>
</dbReference>
<dbReference type="SUPFAM" id="SSF53955">
    <property type="entry name" value="Lysozyme-like"/>
    <property type="match status" value="1"/>
</dbReference>
<protein>
    <recommendedName>
        <fullName>X polypeptide</fullName>
    </recommendedName>
    <alternativeName>
        <fullName>ORF 19</fullName>
    </alternativeName>
    <alternativeName>
        <fullName>ORF169</fullName>
    </alternativeName>
    <alternativeName>
        <fullName>P19 protein</fullName>
    </alternativeName>
</protein>
<evidence type="ECO:0000305" key="1"/>
<proteinExistence type="inferred from homology"/>